<keyword id="KW-0030">Aminoacyl-tRNA synthetase</keyword>
<keyword id="KW-0067">ATP-binding</keyword>
<keyword id="KW-0963">Cytoplasm</keyword>
<keyword id="KW-0436">Ligase</keyword>
<keyword id="KW-0460">Magnesium</keyword>
<keyword id="KW-0479">Metal-binding</keyword>
<keyword id="KW-0547">Nucleotide-binding</keyword>
<keyword id="KW-0648">Protein biosynthesis</keyword>
<keyword id="KW-0694">RNA-binding</keyword>
<keyword id="KW-0820">tRNA-binding</keyword>
<dbReference type="EC" id="6.1.1.20" evidence="1"/>
<dbReference type="EMBL" id="BX571856">
    <property type="protein sequence ID" value="CAG40115.1"/>
    <property type="molecule type" value="Genomic_DNA"/>
</dbReference>
<dbReference type="RefSeq" id="WP_000908974.1">
    <property type="nucleotide sequence ID" value="NC_002952.2"/>
</dbReference>
<dbReference type="SMR" id="Q6GHU6"/>
<dbReference type="KEGG" id="sar:SAR1112"/>
<dbReference type="HOGENOM" id="CLU_016891_0_0_9"/>
<dbReference type="Proteomes" id="UP000000596">
    <property type="component" value="Chromosome"/>
</dbReference>
<dbReference type="GO" id="GO:0009328">
    <property type="term" value="C:phenylalanine-tRNA ligase complex"/>
    <property type="evidence" value="ECO:0007669"/>
    <property type="project" value="TreeGrafter"/>
</dbReference>
<dbReference type="GO" id="GO:0005524">
    <property type="term" value="F:ATP binding"/>
    <property type="evidence" value="ECO:0007669"/>
    <property type="project" value="UniProtKB-UniRule"/>
</dbReference>
<dbReference type="GO" id="GO:0140096">
    <property type="term" value="F:catalytic activity, acting on a protein"/>
    <property type="evidence" value="ECO:0007669"/>
    <property type="project" value="UniProtKB-ARBA"/>
</dbReference>
<dbReference type="GO" id="GO:0000287">
    <property type="term" value="F:magnesium ion binding"/>
    <property type="evidence" value="ECO:0007669"/>
    <property type="project" value="UniProtKB-UniRule"/>
</dbReference>
<dbReference type="GO" id="GO:0004826">
    <property type="term" value="F:phenylalanine-tRNA ligase activity"/>
    <property type="evidence" value="ECO:0007669"/>
    <property type="project" value="UniProtKB-UniRule"/>
</dbReference>
<dbReference type="GO" id="GO:0016740">
    <property type="term" value="F:transferase activity"/>
    <property type="evidence" value="ECO:0007669"/>
    <property type="project" value="UniProtKB-ARBA"/>
</dbReference>
<dbReference type="GO" id="GO:0000049">
    <property type="term" value="F:tRNA binding"/>
    <property type="evidence" value="ECO:0007669"/>
    <property type="project" value="UniProtKB-KW"/>
</dbReference>
<dbReference type="GO" id="GO:0006432">
    <property type="term" value="P:phenylalanyl-tRNA aminoacylation"/>
    <property type="evidence" value="ECO:0007669"/>
    <property type="project" value="UniProtKB-UniRule"/>
</dbReference>
<dbReference type="CDD" id="cd00769">
    <property type="entry name" value="PheRS_beta_core"/>
    <property type="match status" value="1"/>
</dbReference>
<dbReference type="CDD" id="cd02796">
    <property type="entry name" value="tRNA_bind_bactPheRS"/>
    <property type="match status" value="1"/>
</dbReference>
<dbReference type="FunFam" id="2.40.50.140:FF:000045">
    <property type="entry name" value="Phenylalanine--tRNA ligase beta subunit"/>
    <property type="match status" value="1"/>
</dbReference>
<dbReference type="FunFam" id="3.30.56.10:FF:000002">
    <property type="entry name" value="Phenylalanine--tRNA ligase beta subunit"/>
    <property type="match status" value="1"/>
</dbReference>
<dbReference type="FunFam" id="3.30.70.380:FF:000001">
    <property type="entry name" value="Phenylalanine--tRNA ligase beta subunit"/>
    <property type="match status" value="1"/>
</dbReference>
<dbReference type="FunFam" id="3.30.930.10:FF:000022">
    <property type="entry name" value="Phenylalanine--tRNA ligase beta subunit"/>
    <property type="match status" value="1"/>
</dbReference>
<dbReference type="FunFam" id="3.50.40.10:FF:000001">
    <property type="entry name" value="Phenylalanine--tRNA ligase beta subunit"/>
    <property type="match status" value="1"/>
</dbReference>
<dbReference type="Gene3D" id="3.30.56.10">
    <property type="match status" value="2"/>
</dbReference>
<dbReference type="Gene3D" id="3.30.930.10">
    <property type="entry name" value="Bira Bifunctional Protein, Domain 2"/>
    <property type="match status" value="1"/>
</dbReference>
<dbReference type="Gene3D" id="3.30.70.380">
    <property type="entry name" value="Ferrodoxin-fold anticodon-binding domain"/>
    <property type="match status" value="1"/>
</dbReference>
<dbReference type="Gene3D" id="2.40.50.140">
    <property type="entry name" value="Nucleic acid-binding proteins"/>
    <property type="match status" value="1"/>
</dbReference>
<dbReference type="Gene3D" id="3.50.40.10">
    <property type="entry name" value="Phenylalanyl-trna Synthetase, Chain B, domain 3"/>
    <property type="match status" value="1"/>
</dbReference>
<dbReference type="HAMAP" id="MF_00283">
    <property type="entry name" value="Phe_tRNA_synth_beta1"/>
    <property type="match status" value="1"/>
</dbReference>
<dbReference type="InterPro" id="IPR045864">
    <property type="entry name" value="aa-tRNA-synth_II/BPL/LPL"/>
</dbReference>
<dbReference type="InterPro" id="IPR005146">
    <property type="entry name" value="B3/B4_tRNA-bd"/>
</dbReference>
<dbReference type="InterPro" id="IPR009061">
    <property type="entry name" value="DNA-bd_dom_put_sf"/>
</dbReference>
<dbReference type="InterPro" id="IPR005121">
    <property type="entry name" value="Fdx_antiC-bd"/>
</dbReference>
<dbReference type="InterPro" id="IPR036690">
    <property type="entry name" value="Fdx_antiC-bd_sf"/>
</dbReference>
<dbReference type="InterPro" id="IPR012340">
    <property type="entry name" value="NA-bd_OB-fold"/>
</dbReference>
<dbReference type="InterPro" id="IPR045060">
    <property type="entry name" value="Phe-tRNA-ligase_IIc_bsu"/>
</dbReference>
<dbReference type="InterPro" id="IPR004532">
    <property type="entry name" value="Phe-tRNA-ligase_IIc_bsu_bact"/>
</dbReference>
<dbReference type="InterPro" id="IPR020825">
    <property type="entry name" value="Phe-tRNA_synthase-like_B3/B4"/>
</dbReference>
<dbReference type="InterPro" id="IPR041616">
    <property type="entry name" value="PheRS_beta_core"/>
</dbReference>
<dbReference type="InterPro" id="IPR002547">
    <property type="entry name" value="tRNA-bd_dom"/>
</dbReference>
<dbReference type="InterPro" id="IPR033714">
    <property type="entry name" value="tRNA_bind_bactPheRS"/>
</dbReference>
<dbReference type="InterPro" id="IPR005147">
    <property type="entry name" value="tRNA_synthase_B5-dom"/>
</dbReference>
<dbReference type="NCBIfam" id="TIGR00472">
    <property type="entry name" value="pheT_bact"/>
    <property type="match status" value="1"/>
</dbReference>
<dbReference type="NCBIfam" id="NF045760">
    <property type="entry name" value="YtpR"/>
    <property type="match status" value="1"/>
</dbReference>
<dbReference type="PANTHER" id="PTHR10947:SF0">
    <property type="entry name" value="PHENYLALANINE--TRNA LIGASE BETA SUBUNIT"/>
    <property type="match status" value="1"/>
</dbReference>
<dbReference type="PANTHER" id="PTHR10947">
    <property type="entry name" value="PHENYLALANYL-TRNA SYNTHETASE BETA CHAIN AND LEUCINE-RICH REPEAT-CONTAINING PROTEIN 47"/>
    <property type="match status" value="1"/>
</dbReference>
<dbReference type="Pfam" id="PF03483">
    <property type="entry name" value="B3_4"/>
    <property type="match status" value="1"/>
</dbReference>
<dbReference type="Pfam" id="PF03484">
    <property type="entry name" value="B5"/>
    <property type="match status" value="1"/>
</dbReference>
<dbReference type="Pfam" id="PF03147">
    <property type="entry name" value="FDX-ACB"/>
    <property type="match status" value="1"/>
</dbReference>
<dbReference type="Pfam" id="PF01588">
    <property type="entry name" value="tRNA_bind"/>
    <property type="match status" value="1"/>
</dbReference>
<dbReference type="Pfam" id="PF17759">
    <property type="entry name" value="tRNA_synthFbeta"/>
    <property type="match status" value="1"/>
</dbReference>
<dbReference type="SMART" id="SM00873">
    <property type="entry name" value="B3_4"/>
    <property type="match status" value="1"/>
</dbReference>
<dbReference type="SMART" id="SM00874">
    <property type="entry name" value="B5"/>
    <property type="match status" value="1"/>
</dbReference>
<dbReference type="SMART" id="SM00896">
    <property type="entry name" value="FDX-ACB"/>
    <property type="match status" value="1"/>
</dbReference>
<dbReference type="SUPFAM" id="SSF54991">
    <property type="entry name" value="Anticodon-binding domain of PheRS"/>
    <property type="match status" value="1"/>
</dbReference>
<dbReference type="SUPFAM" id="SSF55681">
    <property type="entry name" value="Class II aaRS and biotin synthetases"/>
    <property type="match status" value="1"/>
</dbReference>
<dbReference type="SUPFAM" id="SSF50249">
    <property type="entry name" value="Nucleic acid-binding proteins"/>
    <property type="match status" value="1"/>
</dbReference>
<dbReference type="SUPFAM" id="SSF56037">
    <property type="entry name" value="PheT/TilS domain"/>
    <property type="match status" value="1"/>
</dbReference>
<dbReference type="SUPFAM" id="SSF46955">
    <property type="entry name" value="Putative DNA-binding domain"/>
    <property type="match status" value="1"/>
</dbReference>
<dbReference type="PROSITE" id="PS51483">
    <property type="entry name" value="B5"/>
    <property type="match status" value="1"/>
</dbReference>
<dbReference type="PROSITE" id="PS51447">
    <property type="entry name" value="FDX_ACB"/>
    <property type="match status" value="1"/>
</dbReference>
<dbReference type="PROSITE" id="PS50886">
    <property type="entry name" value="TRBD"/>
    <property type="match status" value="1"/>
</dbReference>
<reference key="1">
    <citation type="journal article" date="2004" name="Proc. Natl. Acad. Sci. U.S.A.">
        <title>Complete genomes of two clinical Staphylococcus aureus strains: evidence for the rapid evolution of virulence and drug resistance.</title>
        <authorList>
            <person name="Holden M.T.G."/>
            <person name="Feil E.J."/>
            <person name="Lindsay J.A."/>
            <person name="Peacock S.J."/>
            <person name="Day N.P.J."/>
            <person name="Enright M.C."/>
            <person name="Foster T.J."/>
            <person name="Moore C.E."/>
            <person name="Hurst L."/>
            <person name="Atkin R."/>
            <person name="Barron A."/>
            <person name="Bason N."/>
            <person name="Bentley S.D."/>
            <person name="Chillingworth C."/>
            <person name="Chillingworth T."/>
            <person name="Churcher C."/>
            <person name="Clark L."/>
            <person name="Corton C."/>
            <person name="Cronin A."/>
            <person name="Doggett J."/>
            <person name="Dowd L."/>
            <person name="Feltwell T."/>
            <person name="Hance Z."/>
            <person name="Harris B."/>
            <person name="Hauser H."/>
            <person name="Holroyd S."/>
            <person name="Jagels K."/>
            <person name="James K.D."/>
            <person name="Lennard N."/>
            <person name="Line A."/>
            <person name="Mayes R."/>
            <person name="Moule S."/>
            <person name="Mungall K."/>
            <person name="Ormond D."/>
            <person name="Quail M.A."/>
            <person name="Rabbinowitsch E."/>
            <person name="Rutherford K.M."/>
            <person name="Sanders M."/>
            <person name="Sharp S."/>
            <person name="Simmonds M."/>
            <person name="Stevens K."/>
            <person name="Whitehead S."/>
            <person name="Barrell B.G."/>
            <person name="Spratt B.G."/>
            <person name="Parkhill J."/>
        </authorList>
    </citation>
    <scope>NUCLEOTIDE SEQUENCE [LARGE SCALE GENOMIC DNA]</scope>
    <source>
        <strain>MRSA252</strain>
    </source>
</reference>
<proteinExistence type="inferred from homology"/>
<protein>
    <recommendedName>
        <fullName evidence="1">Phenylalanine--tRNA ligase beta subunit</fullName>
        <ecNumber evidence="1">6.1.1.20</ecNumber>
    </recommendedName>
    <alternativeName>
        <fullName evidence="1">Phenylalanyl-tRNA synthetase beta subunit</fullName>
        <shortName evidence="1">PheRS</shortName>
    </alternativeName>
</protein>
<accession>Q6GHU6</accession>
<gene>
    <name evidence="1" type="primary">pheT</name>
    <name type="ordered locus">SAR1112</name>
</gene>
<evidence type="ECO:0000255" key="1">
    <source>
        <dbReference type="HAMAP-Rule" id="MF_00283"/>
    </source>
</evidence>
<feature type="chain" id="PRO_0000126951" description="Phenylalanine--tRNA ligase beta subunit">
    <location>
        <begin position="1"/>
        <end position="800"/>
    </location>
</feature>
<feature type="domain" description="tRNA-binding" evidence="1">
    <location>
        <begin position="39"/>
        <end position="154"/>
    </location>
</feature>
<feature type="domain" description="B5" evidence="1">
    <location>
        <begin position="408"/>
        <end position="483"/>
    </location>
</feature>
<feature type="domain" description="FDX-ACB" evidence="1">
    <location>
        <begin position="708"/>
        <end position="800"/>
    </location>
</feature>
<feature type="binding site" evidence="1">
    <location>
        <position position="461"/>
    </location>
    <ligand>
        <name>Mg(2+)</name>
        <dbReference type="ChEBI" id="CHEBI:18420"/>
        <note>shared with alpha subunit</note>
    </ligand>
</feature>
<feature type="binding site" evidence="1">
    <location>
        <position position="467"/>
    </location>
    <ligand>
        <name>Mg(2+)</name>
        <dbReference type="ChEBI" id="CHEBI:18420"/>
        <note>shared with alpha subunit</note>
    </ligand>
</feature>
<feature type="binding site" evidence="1">
    <location>
        <position position="470"/>
    </location>
    <ligand>
        <name>Mg(2+)</name>
        <dbReference type="ChEBI" id="CHEBI:18420"/>
        <note>shared with alpha subunit</note>
    </ligand>
</feature>
<feature type="binding site" evidence="1">
    <location>
        <position position="471"/>
    </location>
    <ligand>
        <name>Mg(2+)</name>
        <dbReference type="ChEBI" id="CHEBI:18420"/>
        <note>shared with alpha subunit</note>
    </ligand>
</feature>
<comment type="catalytic activity">
    <reaction evidence="1">
        <text>tRNA(Phe) + L-phenylalanine + ATP = L-phenylalanyl-tRNA(Phe) + AMP + diphosphate + H(+)</text>
        <dbReference type="Rhea" id="RHEA:19413"/>
        <dbReference type="Rhea" id="RHEA-COMP:9668"/>
        <dbReference type="Rhea" id="RHEA-COMP:9699"/>
        <dbReference type="ChEBI" id="CHEBI:15378"/>
        <dbReference type="ChEBI" id="CHEBI:30616"/>
        <dbReference type="ChEBI" id="CHEBI:33019"/>
        <dbReference type="ChEBI" id="CHEBI:58095"/>
        <dbReference type="ChEBI" id="CHEBI:78442"/>
        <dbReference type="ChEBI" id="CHEBI:78531"/>
        <dbReference type="ChEBI" id="CHEBI:456215"/>
        <dbReference type="EC" id="6.1.1.20"/>
    </reaction>
</comment>
<comment type="cofactor">
    <cofactor evidence="1">
        <name>Mg(2+)</name>
        <dbReference type="ChEBI" id="CHEBI:18420"/>
    </cofactor>
    <text evidence="1">Binds 2 magnesium ions per tetramer.</text>
</comment>
<comment type="subunit">
    <text evidence="1">Tetramer of two alpha and two beta subunits.</text>
</comment>
<comment type="subcellular location">
    <subcellularLocation>
        <location>Cytoplasm</location>
    </subcellularLocation>
</comment>
<comment type="similarity">
    <text evidence="1">Belongs to the phenylalanyl-tRNA synthetase beta subunit family. Type 1 subfamily.</text>
</comment>
<name>SYFB_STAAR</name>
<organism>
    <name type="scientific">Staphylococcus aureus (strain MRSA252)</name>
    <dbReference type="NCBI Taxonomy" id="282458"/>
    <lineage>
        <taxon>Bacteria</taxon>
        <taxon>Bacillati</taxon>
        <taxon>Bacillota</taxon>
        <taxon>Bacilli</taxon>
        <taxon>Bacillales</taxon>
        <taxon>Staphylococcaceae</taxon>
        <taxon>Staphylococcus</taxon>
    </lineage>
</organism>
<sequence length="800" mass="88987">MLISNEWLKEYVTIDDSVSNLAERITRTGIEVDDLIDYTKDIKNLVVGFVKSKEKHPDADKLNVCQVDIGEDEPVQIVCGAPNVDAGQYVIVAKVGGRLPGGIKIKRAKLRGERSEGMICSLQEIGISSNYIPKSFESGIFVFSESQVPGTDALQALYLDDQVMEFDLTPNRADALSMIGTAYEVAALYNTKMTKPETTSNELELSANDELTVTIENEDKVPYYSARVVHDVTIEPSPIWMQVRLIKAGIRPINNVVDISNYVLLEYGQPLHMFDQDAIGSQQIVVRQANEGEKMTTLDDTERELLTSDIVITNGQTPIALAGVMGGDFSEVKEHTSNIVIEGAIFDPVSIRHTSRRLNLRSESSSRFEKGIATEFVDEAVDRACYLLQTYANGKVLKDRVSSGELGAFITPIDITADKINRTIGFDLSQNDIVTIFNQLGFDTEINDDVITVQVPSRRKDITIKEDLIEEVARIYGYDDIPSTLPVFEKVTSGQLTDRQYKTRMVKEVLEGAGLDQAITYSLVSKEDATAFAMQQRQTIDLLMPMSEAHASLRQSLLPHLIEAASYNVARKNKDVKLFEIGNVFFANGEGELPDQVEYLSGILTGDYVVNQWQGKKETVDFYLAKGVVDRVSEKLNLEFSYRRADIDGLHPGRTAEILLENKVIGFIGELHPTLAADNDLKRTYVFELNFDALMAVSVGYINYQPIPRFPGMSRDIALEVDQNIPAADLLSTIHAHGGNILKDTLVFDVYQGEHLEKGKKSIAIRLNYLDTEETLTDERVSKVQAEIEAALIEQGAVIR</sequence>